<name>ITPA_AJECG</name>
<sequence>MKTINFITGNKNKLAEVQAILGDTIEVQNRAIDVPEIQGSIEEIAKEKCRKAAETVQGPALTEDTALEFNALKGLPGPYIKWFLEALGHDGLNKLLDPYEDKSIVAVCTFAFSSGPGAEPIIFQGKTEGRMVPARGLAKFGWDPIFEYEGNTFAEMDKDEKNLISHRYKALAKLKQWLAETYP</sequence>
<feature type="chain" id="PRO_0000413126" description="Inosine triphosphate pyrophosphatase">
    <location>
        <begin position="1"/>
        <end position="183"/>
    </location>
</feature>
<feature type="binding site" evidence="1">
    <location>
        <begin position="8"/>
        <end position="13"/>
    </location>
    <ligand>
        <name>ITP</name>
        <dbReference type="ChEBI" id="CHEBI:61402"/>
    </ligand>
</feature>
<feature type="binding site" evidence="1">
    <location>
        <position position="36"/>
    </location>
    <ligand>
        <name>Mg(2+)</name>
        <dbReference type="ChEBI" id="CHEBI:18420"/>
    </ligand>
</feature>
<feature type="binding site" evidence="1">
    <location>
        <position position="48"/>
    </location>
    <ligand>
        <name>ITP</name>
        <dbReference type="ChEBI" id="CHEBI:61402"/>
    </ligand>
</feature>
<feature type="binding site" evidence="1">
    <location>
        <begin position="64"/>
        <end position="65"/>
    </location>
    <ligand>
        <name>ITP</name>
        <dbReference type="ChEBI" id="CHEBI:61402"/>
    </ligand>
</feature>
<feature type="binding site" evidence="1">
    <location>
        <position position="81"/>
    </location>
    <ligand>
        <name>ITP</name>
        <dbReference type="ChEBI" id="CHEBI:61402"/>
    </ligand>
</feature>
<feature type="binding site" evidence="1">
    <location>
        <begin position="140"/>
        <end position="143"/>
    </location>
    <ligand>
        <name>ITP</name>
        <dbReference type="ChEBI" id="CHEBI:61402"/>
    </ligand>
</feature>
<feature type="binding site" evidence="1">
    <location>
        <position position="161"/>
    </location>
    <ligand>
        <name>ITP</name>
        <dbReference type="ChEBI" id="CHEBI:61402"/>
    </ligand>
</feature>
<feature type="binding site" evidence="1">
    <location>
        <begin position="166"/>
        <end position="167"/>
    </location>
    <ligand>
        <name>ITP</name>
        <dbReference type="ChEBI" id="CHEBI:61402"/>
    </ligand>
</feature>
<protein>
    <recommendedName>
        <fullName evidence="1">Inosine triphosphate pyrophosphatase</fullName>
        <shortName evidence="1">ITPase</shortName>
        <shortName evidence="1">Inosine triphosphatase</shortName>
        <ecNumber evidence="1">3.6.1.66</ecNumber>
    </recommendedName>
    <alternativeName>
        <fullName evidence="1">Non-canonical purine NTP pyrophosphatase</fullName>
    </alternativeName>
    <alternativeName>
        <fullName evidence="1">Non-standard purine NTP pyrophosphatase</fullName>
    </alternativeName>
    <alternativeName>
        <fullName evidence="1">Nucleoside-triphosphate diphosphatase</fullName>
    </alternativeName>
    <alternativeName>
        <fullName evidence="1">Nucleoside-triphosphate pyrophosphatase</fullName>
        <shortName evidence="1">NTPase</shortName>
    </alternativeName>
    <alternativeName>
        <fullName evidence="1">XTP/dITP diphosphatase</fullName>
    </alternativeName>
</protein>
<organism>
    <name type="scientific">Ajellomyces capsulatus (strain G186AR / H82 / ATCC MYA-2454 / RMSCC 2432)</name>
    <name type="common">Darling's disease fungus</name>
    <name type="synonym">Histoplasma capsulatum</name>
    <dbReference type="NCBI Taxonomy" id="447093"/>
    <lineage>
        <taxon>Eukaryota</taxon>
        <taxon>Fungi</taxon>
        <taxon>Dikarya</taxon>
        <taxon>Ascomycota</taxon>
        <taxon>Pezizomycotina</taxon>
        <taxon>Eurotiomycetes</taxon>
        <taxon>Eurotiomycetidae</taxon>
        <taxon>Onygenales</taxon>
        <taxon>Ajellomycetaceae</taxon>
        <taxon>Histoplasma</taxon>
    </lineage>
</organism>
<gene>
    <name type="ORF">HCBG_02177</name>
</gene>
<keyword id="KW-0963">Cytoplasm</keyword>
<keyword id="KW-0378">Hydrolase</keyword>
<keyword id="KW-0460">Magnesium</keyword>
<keyword id="KW-0464">Manganese</keyword>
<keyword id="KW-0479">Metal-binding</keyword>
<keyword id="KW-0546">Nucleotide metabolism</keyword>
<keyword id="KW-0547">Nucleotide-binding</keyword>
<keyword id="KW-0539">Nucleus</keyword>
<keyword id="KW-1185">Reference proteome</keyword>
<evidence type="ECO:0000255" key="1">
    <source>
        <dbReference type="HAMAP-Rule" id="MF_03148"/>
    </source>
</evidence>
<evidence type="ECO:0000305" key="2"/>
<comment type="function">
    <text evidence="1">Pyrophosphatase that hydrolyzes non-canonical purine nucleotides such as inosine triphosphate (ITP), deoxyinosine triphosphate (dITP) or xanthosine 5'-triphosphate (XTP) to their respective monophosphate derivatives. The enzyme does not distinguish between the deoxy- and ribose forms. Probably excludes non-canonical purines from RNA and DNA precursor pools, thus preventing their incorporation into RNA and DNA and avoiding chromosomal lesions.</text>
</comment>
<comment type="catalytic activity">
    <reaction evidence="1">
        <text>ITP + H2O = IMP + diphosphate + H(+)</text>
        <dbReference type="Rhea" id="RHEA:29399"/>
        <dbReference type="ChEBI" id="CHEBI:15377"/>
        <dbReference type="ChEBI" id="CHEBI:15378"/>
        <dbReference type="ChEBI" id="CHEBI:33019"/>
        <dbReference type="ChEBI" id="CHEBI:58053"/>
        <dbReference type="ChEBI" id="CHEBI:61402"/>
        <dbReference type="EC" id="3.6.1.66"/>
    </reaction>
    <physiologicalReaction direction="left-to-right" evidence="1">
        <dbReference type="Rhea" id="RHEA:29400"/>
    </physiologicalReaction>
</comment>
<comment type="catalytic activity">
    <reaction evidence="1">
        <text>dITP + H2O = dIMP + diphosphate + H(+)</text>
        <dbReference type="Rhea" id="RHEA:28342"/>
        <dbReference type="ChEBI" id="CHEBI:15377"/>
        <dbReference type="ChEBI" id="CHEBI:15378"/>
        <dbReference type="ChEBI" id="CHEBI:33019"/>
        <dbReference type="ChEBI" id="CHEBI:61194"/>
        <dbReference type="ChEBI" id="CHEBI:61382"/>
        <dbReference type="EC" id="3.6.1.66"/>
    </reaction>
    <physiologicalReaction direction="left-to-right" evidence="1">
        <dbReference type="Rhea" id="RHEA:28343"/>
    </physiologicalReaction>
</comment>
<comment type="catalytic activity">
    <reaction evidence="1">
        <text>XTP + H2O = XMP + diphosphate + H(+)</text>
        <dbReference type="Rhea" id="RHEA:28610"/>
        <dbReference type="ChEBI" id="CHEBI:15377"/>
        <dbReference type="ChEBI" id="CHEBI:15378"/>
        <dbReference type="ChEBI" id="CHEBI:33019"/>
        <dbReference type="ChEBI" id="CHEBI:57464"/>
        <dbReference type="ChEBI" id="CHEBI:61314"/>
        <dbReference type="EC" id="3.6.1.66"/>
    </reaction>
    <physiologicalReaction direction="left-to-right" evidence="1">
        <dbReference type="Rhea" id="RHEA:28611"/>
    </physiologicalReaction>
</comment>
<comment type="cofactor">
    <cofactor evidence="1">
        <name>Mg(2+)</name>
        <dbReference type="ChEBI" id="CHEBI:18420"/>
    </cofactor>
    <cofactor evidence="1">
        <name>Mn(2+)</name>
        <dbReference type="ChEBI" id="CHEBI:29035"/>
    </cofactor>
    <text evidence="1">Binds 1 divalent metal cation per subunit; can use either Mg(2+) or Mn(2+).</text>
</comment>
<comment type="subunit">
    <text evidence="1">Homodimer.</text>
</comment>
<comment type="subcellular location">
    <subcellularLocation>
        <location evidence="1">Cytoplasm</location>
    </subcellularLocation>
    <subcellularLocation>
        <location evidence="1">Nucleus</location>
    </subcellularLocation>
</comment>
<comment type="similarity">
    <text evidence="1">Belongs to the HAM1 NTPase family.</text>
</comment>
<comment type="sequence caution" evidence="2">
    <conflict type="erroneous gene model prediction">
        <sequence resource="EMBL-CDS" id="EEH10532"/>
    </conflict>
</comment>
<dbReference type="EC" id="3.6.1.66" evidence="1"/>
<dbReference type="EMBL" id="GG663364">
    <property type="protein sequence ID" value="EEH10532.1"/>
    <property type="status" value="ALT_SEQ"/>
    <property type="molecule type" value="Genomic_DNA"/>
</dbReference>
<dbReference type="SMR" id="C0NE84"/>
<dbReference type="FunCoup" id="C0NE84">
    <property type="interactions" value="683"/>
</dbReference>
<dbReference type="STRING" id="447093.C0NE84"/>
<dbReference type="VEuPathDB" id="FungiDB:I7I50_00248"/>
<dbReference type="HOGENOM" id="CLU_082080_1_1_1"/>
<dbReference type="InParanoid" id="C0NE84"/>
<dbReference type="Proteomes" id="UP000001631">
    <property type="component" value="Unassembled WGS sequence"/>
</dbReference>
<dbReference type="GO" id="GO:0005737">
    <property type="term" value="C:cytoplasm"/>
    <property type="evidence" value="ECO:0007669"/>
    <property type="project" value="UniProtKB-SubCell"/>
</dbReference>
<dbReference type="GO" id="GO:0005634">
    <property type="term" value="C:nucleus"/>
    <property type="evidence" value="ECO:0007669"/>
    <property type="project" value="UniProtKB-SubCell"/>
</dbReference>
<dbReference type="GO" id="GO:0035870">
    <property type="term" value="F:dITP diphosphatase activity"/>
    <property type="evidence" value="ECO:0007669"/>
    <property type="project" value="RHEA"/>
</dbReference>
<dbReference type="GO" id="GO:0036220">
    <property type="term" value="F:ITP diphosphatase activity"/>
    <property type="evidence" value="ECO:0007669"/>
    <property type="project" value="RHEA"/>
</dbReference>
<dbReference type="GO" id="GO:0046872">
    <property type="term" value="F:metal ion binding"/>
    <property type="evidence" value="ECO:0007669"/>
    <property type="project" value="UniProtKB-KW"/>
</dbReference>
<dbReference type="GO" id="GO:0000166">
    <property type="term" value="F:nucleotide binding"/>
    <property type="evidence" value="ECO:0007669"/>
    <property type="project" value="UniProtKB-KW"/>
</dbReference>
<dbReference type="GO" id="GO:0036222">
    <property type="term" value="F:XTP diphosphatase activity"/>
    <property type="evidence" value="ECO:0007669"/>
    <property type="project" value="RHEA"/>
</dbReference>
<dbReference type="GO" id="GO:0009204">
    <property type="term" value="P:deoxyribonucleoside triphosphate catabolic process"/>
    <property type="evidence" value="ECO:0007669"/>
    <property type="project" value="UniProtKB-UniRule"/>
</dbReference>
<dbReference type="GO" id="GO:0009117">
    <property type="term" value="P:nucleotide metabolic process"/>
    <property type="evidence" value="ECO:0007669"/>
    <property type="project" value="UniProtKB-KW"/>
</dbReference>
<dbReference type="CDD" id="cd00515">
    <property type="entry name" value="HAM1"/>
    <property type="match status" value="1"/>
</dbReference>
<dbReference type="FunFam" id="3.90.950.10:FF:000003">
    <property type="entry name" value="Inosine triphosphate pyrophosphatase"/>
    <property type="match status" value="1"/>
</dbReference>
<dbReference type="Gene3D" id="3.90.950.10">
    <property type="match status" value="1"/>
</dbReference>
<dbReference type="HAMAP" id="MF_03148">
    <property type="entry name" value="HAM1_NTPase"/>
    <property type="match status" value="1"/>
</dbReference>
<dbReference type="InterPro" id="IPR027502">
    <property type="entry name" value="ITPase"/>
</dbReference>
<dbReference type="InterPro" id="IPR029001">
    <property type="entry name" value="ITPase-like_fam"/>
</dbReference>
<dbReference type="InterPro" id="IPR002637">
    <property type="entry name" value="RdgB/HAM1"/>
</dbReference>
<dbReference type="NCBIfam" id="TIGR00042">
    <property type="entry name" value="RdgB/HAM1 family non-canonical purine NTP pyrophosphatase"/>
    <property type="match status" value="1"/>
</dbReference>
<dbReference type="PANTHER" id="PTHR11067:SF9">
    <property type="entry name" value="INOSINE TRIPHOSPHATE PYROPHOSPHATASE"/>
    <property type="match status" value="1"/>
</dbReference>
<dbReference type="PANTHER" id="PTHR11067">
    <property type="entry name" value="INOSINE TRIPHOSPHATE PYROPHOSPHATASE/HAM1 PROTEIN"/>
    <property type="match status" value="1"/>
</dbReference>
<dbReference type="Pfam" id="PF01725">
    <property type="entry name" value="Ham1p_like"/>
    <property type="match status" value="1"/>
</dbReference>
<dbReference type="SUPFAM" id="SSF52972">
    <property type="entry name" value="ITPase-like"/>
    <property type="match status" value="1"/>
</dbReference>
<proteinExistence type="inferred from homology"/>
<reference key="1">
    <citation type="submission" date="2009-02" db="EMBL/GenBank/DDBJ databases">
        <title>The genome sequence of Ajellomyces capsulatus strain G186AR.</title>
        <authorList>
            <person name="Champion M."/>
            <person name="Cuomo C.A."/>
            <person name="Ma L.-J."/>
            <person name="Henn M.R."/>
            <person name="Sil A."/>
            <person name="Goldman B."/>
            <person name="Young S.K."/>
            <person name="Kodira C.D."/>
            <person name="Zeng Q."/>
            <person name="Koehrsen M."/>
            <person name="Alvarado L."/>
            <person name="Berlin A."/>
            <person name="Borenstein D."/>
            <person name="Chen Z."/>
            <person name="Engels R."/>
            <person name="Freedman E."/>
            <person name="Gellesch M."/>
            <person name="Goldberg J."/>
            <person name="Griggs A."/>
            <person name="Gujja S."/>
            <person name="Heiman D."/>
            <person name="Hepburn T."/>
            <person name="Howarth C."/>
            <person name="Jen D."/>
            <person name="Larson L."/>
            <person name="Lewis B."/>
            <person name="Mehta T."/>
            <person name="Park D."/>
            <person name="Pearson M."/>
            <person name="Roberts A."/>
            <person name="Saif S."/>
            <person name="Shea T."/>
            <person name="Shenoy N."/>
            <person name="Sisk P."/>
            <person name="Stolte C."/>
            <person name="Sykes S."/>
            <person name="Walk T."/>
            <person name="White J."/>
            <person name="Yandava C."/>
            <person name="Klein B."/>
            <person name="McEwen J.G."/>
            <person name="Puccia R."/>
            <person name="Goldman G.H."/>
            <person name="Felipe M.S."/>
            <person name="Nino-Vega G."/>
            <person name="San-Blas G."/>
            <person name="Taylor J."/>
            <person name="Mendoza L."/>
            <person name="Galagan J.E."/>
            <person name="Nusbaum C."/>
            <person name="Birren B.W."/>
        </authorList>
    </citation>
    <scope>NUCLEOTIDE SEQUENCE [LARGE SCALE GENOMIC DNA]</scope>
    <source>
        <strain>G186AR / H82 / ATCC MYA-2454 / RMSCC 2432</strain>
    </source>
</reference>
<accession>C0NE84</accession>